<protein>
    <recommendedName>
        <fullName>Superoxide dismutase [Fe] 1, chloroplastic</fullName>
        <ecNumber evidence="9">1.15.1.1</ecNumber>
    </recommendedName>
    <alternativeName>
        <fullName>Protein FE SUPEROXIDE DISMUTASE 1</fullName>
        <shortName evidence="7">FeSOD</shortName>
    </alternativeName>
</protein>
<dbReference type="EC" id="1.15.1.1" evidence="9"/>
<dbReference type="EMBL" id="M55910">
    <property type="protein sequence ID" value="AAA32791.1"/>
    <property type="status" value="ALT_INIT"/>
    <property type="molecule type" value="mRNA"/>
</dbReference>
<dbReference type="EMBL" id="AL035523">
    <property type="protein sequence ID" value="CAB36752.1"/>
    <property type="status" value="ALT_SEQ"/>
    <property type="molecule type" value="Genomic_DNA"/>
</dbReference>
<dbReference type="EMBL" id="AL161562">
    <property type="protein sequence ID" value="CAB79419.1"/>
    <property type="status" value="ALT_SEQ"/>
    <property type="molecule type" value="Genomic_DNA"/>
</dbReference>
<dbReference type="EMBL" id="CP002687">
    <property type="protein sequence ID" value="AEE85007.1"/>
    <property type="molecule type" value="Genomic_DNA"/>
</dbReference>
<dbReference type="EMBL" id="CP002687">
    <property type="protein sequence ID" value="AEE85008.1"/>
    <property type="molecule type" value="Genomic_DNA"/>
</dbReference>
<dbReference type="EMBL" id="CP002687">
    <property type="protein sequence ID" value="AEE85009.1"/>
    <property type="molecule type" value="Genomic_DNA"/>
</dbReference>
<dbReference type="EMBL" id="CP002687">
    <property type="protein sequence ID" value="AEE85011.1"/>
    <property type="molecule type" value="Genomic_DNA"/>
</dbReference>
<dbReference type="EMBL" id="AF326862">
    <property type="protein sequence ID" value="AAG41444.1"/>
    <property type="molecule type" value="mRNA"/>
</dbReference>
<dbReference type="EMBL" id="AF324711">
    <property type="protein sequence ID" value="AAG40062.1"/>
    <property type="molecule type" value="mRNA"/>
</dbReference>
<dbReference type="EMBL" id="AF339685">
    <property type="protein sequence ID" value="AAK00367.1"/>
    <property type="molecule type" value="mRNA"/>
</dbReference>
<dbReference type="EMBL" id="AY039560">
    <property type="protein sequence ID" value="AAK62615.1"/>
    <property type="molecule type" value="mRNA"/>
</dbReference>
<dbReference type="EMBL" id="AY129470">
    <property type="protein sequence ID" value="AAM91056.1"/>
    <property type="molecule type" value="mRNA"/>
</dbReference>
<dbReference type="EMBL" id="AY087220">
    <property type="protein sequence ID" value="AAM64776.1"/>
    <property type="molecule type" value="mRNA"/>
</dbReference>
<dbReference type="PIR" id="B39267">
    <property type="entry name" value="B39267"/>
</dbReference>
<dbReference type="PIR" id="G85289">
    <property type="entry name" value="G85289"/>
</dbReference>
<dbReference type="PIR" id="T05531">
    <property type="entry name" value="T05531"/>
</dbReference>
<dbReference type="RefSeq" id="NP_001190834.1">
    <molecule id="P21276-1"/>
    <property type="nucleotide sequence ID" value="NM_001203905.1"/>
</dbReference>
<dbReference type="RefSeq" id="NP_194240.1">
    <molecule id="P21276-1"/>
    <property type="nucleotide sequence ID" value="NM_118642.2"/>
</dbReference>
<dbReference type="RefSeq" id="NP_849440.1">
    <molecule id="P21276-1"/>
    <property type="nucleotide sequence ID" value="NM_179109.3"/>
</dbReference>
<dbReference type="RefSeq" id="NP_849441.1">
    <molecule id="P21276-1"/>
    <property type="nucleotide sequence ID" value="NM_179110.2"/>
</dbReference>
<dbReference type="SMR" id="P21276"/>
<dbReference type="BioGRID" id="13900">
    <property type="interactions" value="10"/>
</dbReference>
<dbReference type="FunCoup" id="P21276">
    <property type="interactions" value="96"/>
</dbReference>
<dbReference type="IntAct" id="P21276">
    <property type="interactions" value="2"/>
</dbReference>
<dbReference type="STRING" id="3702.P21276"/>
<dbReference type="iPTMnet" id="P21276"/>
<dbReference type="PaxDb" id="3702-AT4G25100.1"/>
<dbReference type="ProteomicsDB" id="228227">
    <molecule id="P21276-1"/>
</dbReference>
<dbReference type="EnsemblPlants" id="AT4G25100.1">
    <molecule id="P21276-1"/>
    <property type="protein sequence ID" value="AT4G25100.1"/>
    <property type="gene ID" value="AT4G25100"/>
</dbReference>
<dbReference type="EnsemblPlants" id="AT4G25100.2">
    <molecule id="P21276-1"/>
    <property type="protein sequence ID" value="AT4G25100.2"/>
    <property type="gene ID" value="AT4G25100"/>
</dbReference>
<dbReference type="EnsemblPlants" id="AT4G25100.3">
    <molecule id="P21276-1"/>
    <property type="protein sequence ID" value="AT4G25100.3"/>
    <property type="gene ID" value="AT4G25100"/>
</dbReference>
<dbReference type="EnsemblPlants" id="AT4G25100.5">
    <molecule id="P21276-1"/>
    <property type="protein sequence ID" value="AT4G25100.5"/>
    <property type="gene ID" value="AT4G25100"/>
</dbReference>
<dbReference type="GeneID" id="828613"/>
<dbReference type="Gramene" id="AT4G25100.1">
    <molecule id="P21276-1"/>
    <property type="protein sequence ID" value="AT4G25100.1"/>
    <property type="gene ID" value="AT4G25100"/>
</dbReference>
<dbReference type="Gramene" id="AT4G25100.2">
    <molecule id="P21276-1"/>
    <property type="protein sequence ID" value="AT4G25100.2"/>
    <property type="gene ID" value="AT4G25100"/>
</dbReference>
<dbReference type="Gramene" id="AT4G25100.3">
    <molecule id="P21276-1"/>
    <property type="protein sequence ID" value="AT4G25100.3"/>
    <property type="gene ID" value="AT4G25100"/>
</dbReference>
<dbReference type="Gramene" id="AT4G25100.5">
    <molecule id="P21276-1"/>
    <property type="protein sequence ID" value="AT4G25100.5"/>
    <property type="gene ID" value="AT4G25100"/>
</dbReference>
<dbReference type="KEGG" id="ath:AT4G25100"/>
<dbReference type="Araport" id="AT4G25100"/>
<dbReference type="TAIR" id="AT4G25100">
    <property type="gene designation" value="FSD1"/>
</dbReference>
<dbReference type="eggNOG" id="KOG0876">
    <property type="taxonomic scope" value="Eukaryota"/>
</dbReference>
<dbReference type="InParanoid" id="P21276"/>
<dbReference type="OMA" id="KIYQGHD"/>
<dbReference type="OrthoDB" id="239262at2759"/>
<dbReference type="PhylomeDB" id="P21276"/>
<dbReference type="PRO" id="PR:P21276"/>
<dbReference type="Proteomes" id="UP000006548">
    <property type="component" value="Chromosome 4"/>
</dbReference>
<dbReference type="ExpressionAtlas" id="P21276">
    <property type="expression patterns" value="baseline and differential"/>
</dbReference>
<dbReference type="GO" id="GO:0009507">
    <property type="term" value="C:chloroplast"/>
    <property type="evidence" value="ECO:0000314"/>
    <property type="project" value="TAIR"/>
</dbReference>
<dbReference type="GO" id="GO:0009941">
    <property type="term" value="C:chloroplast envelope"/>
    <property type="evidence" value="ECO:0007005"/>
    <property type="project" value="TAIR"/>
</dbReference>
<dbReference type="GO" id="GO:0031969">
    <property type="term" value="C:chloroplast membrane"/>
    <property type="evidence" value="ECO:0007669"/>
    <property type="project" value="UniProtKB-SubCell"/>
</dbReference>
<dbReference type="GO" id="GO:0009570">
    <property type="term" value="C:chloroplast stroma"/>
    <property type="evidence" value="ECO:0007005"/>
    <property type="project" value="TAIR"/>
</dbReference>
<dbReference type="GO" id="GO:0005737">
    <property type="term" value="C:cytoplasm"/>
    <property type="evidence" value="ECO:0000314"/>
    <property type="project" value="UniProtKB"/>
</dbReference>
<dbReference type="GO" id="GO:0005829">
    <property type="term" value="C:cytosol"/>
    <property type="evidence" value="ECO:0007005"/>
    <property type="project" value="TAIR"/>
</dbReference>
<dbReference type="GO" id="GO:0005739">
    <property type="term" value="C:mitochondrion"/>
    <property type="evidence" value="ECO:0007005"/>
    <property type="project" value="TAIR"/>
</dbReference>
<dbReference type="GO" id="GO:0005886">
    <property type="term" value="C:plasma membrane"/>
    <property type="evidence" value="ECO:0007005"/>
    <property type="project" value="TAIR"/>
</dbReference>
<dbReference type="GO" id="GO:0009579">
    <property type="term" value="C:thylakoid"/>
    <property type="evidence" value="ECO:0007005"/>
    <property type="project" value="TAIR"/>
</dbReference>
<dbReference type="GO" id="GO:0005507">
    <property type="term" value="F:copper ion binding"/>
    <property type="evidence" value="ECO:0007005"/>
    <property type="project" value="TAIR"/>
</dbReference>
<dbReference type="GO" id="GO:0019904">
    <property type="term" value="F:protein domain specific binding"/>
    <property type="evidence" value="ECO:0000353"/>
    <property type="project" value="CAFA"/>
</dbReference>
<dbReference type="GO" id="GO:0004784">
    <property type="term" value="F:superoxide dismutase activity"/>
    <property type="evidence" value="ECO:0000315"/>
    <property type="project" value="TAIR"/>
</dbReference>
<dbReference type="GO" id="GO:0007623">
    <property type="term" value="P:circadian rhythm"/>
    <property type="evidence" value="ECO:0000270"/>
    <property type="project" value="TAIR"/>
</dbReference>
<dbReference type="GO" id="GO:0046686">
    <property type="term" value="P:response to cadmium ion"/>
    <property type="evidence" value="ECO:0000270"/>
    <property type="project" value="TAIR"/>
</dbReference>
<dbReference type="GO" id="GO:0046688">
    <property type="term" value="P:response to copper ion"/>
    <property type="evidence" value="ECO:0000270"/>
    <property type="project" value="TAIR"/>
</dbReference>
<dbReference type="GO" id="GO:0009642">
    <property type="term" value="P:response to light intensity"/>
    <property type="evidence" value="ECO:0000270"/>
    <property type="project" value="UniProtKB"/>
</dbReference>
<dbReference type="GO" id="GO:0010193">
    <property type="term" value="P:response to ozone"/>
    <property type="evidence" value="ECO:0000270"/>
    <property type="project" value="UniProtKB"/>
</dbReference>
<dbReference type="FunFam" id="1.10.287.990:FF:000002">
    <property type="entry name" value="Superoxide dismutase"/>
    <property type="match status" value="1"/>
</dbReference>
<dbReference type="FunFam" id="3.55.40.20:FF:000005">
    <property type="entry name" value="Superoxide dismutase"/>
    <property type="match status" value="1"/>
</dbReference>
<dbReference type="Gene3D" id="1.10.287.990">
    <property type="entry name" value="Fe,Mn superoxide dismutase (SOD) domain"/>
    <property type="match status" value="1"/>
</dbReference>
<dbReference type="Gene3D" id="3.55.40.20">
    <property type="entry name" value="Iron/manganese superoxide dismutase, C-terminal domain"/>
    <property type="match status" value="1"/>
</dbReference>
<dbReference type="InterPro" id="IPR001189">
    <property type="entry name" value="Mn/Fe_SOD"/>
</dbReference>
<dbReference type="InterPro" id="IPR019833">
    <property type="entry name" value="Mn/Fe_SOD_BS"/>
</dbReference>
<dbReference type="InterPro" id="IPR019832">
    <property type="entry name" value="Mn/Fe_SOD_C"/>
</dbReference>
<dbReference type="InterPro" id="IPR019831">
    <property type="entry name" value="Mn/Fe_SOD_N"/>
</dbReference>
<dbReference type="InterPro" id="IPR036324">
    <property type="entry name" value="Mn/Fe_SOD_N_sf"/>
</dbReference>
<dbReference type="InterPro" id="IPR036314">
    <property type="entry name" value="SOD_C_sf"/>
</dbReference>
<dbReference type="PANTHER" id="PTHR42769">
    <property type="entry name" value="SUPEROXIDE DISMUTASE"/>
    <property type="match status" value="1"/>
</dbReference>
<dbReference type="PANTHER" id="PTHR42769:SF8">
    <property type="entry name" value="SUPEROXIDE DISMUTASE [FE] 1, CHLOROPLASTIC"/>
    <property type="match status" value="1"/>
</dbReference>
<dbReference type="Pfam" id="PF02777">
    <property type="entry name" value="Sod_Fe_C"/>
    <property type="match status" value="1"/>
</dbReference>
<dbReference type="Pfam" id="PF00081">
    <property type="entry name" value="Sod_Fe_N"/>
    <property type="match status" value="1"/>
</dbReference>
<dbReference type="PIRSF" id="PIRSF000349">
    <property type="entry name" value="SODismutase"/>
    <property type="match status" value="1"/>
</dbReference>
<dbReference type="PRINTS" id="PR01703">
    <property type="entry name" value="MNSODISMTASE"/>
</dbReference>
<dbReference type="SUPFAM" id="SSF54719">
    <property type="entry name" value="Fe,Mn superoxide dismutase (SOD), C-terminal domain"/>
    <property type="match status" value="1"/>
</dbReference>
<dbReference type="SUPFAM" id="SSF46609">
    <property type="entry name" value="Fe,Mn superoxide dismutase (SOD), N-terminal domain"/>
    <property type="match status" value="1"/>
</dbReference>
<dbReference type="PROSITE" id="PS00088">
    <property type="entry name" value="SOD_MN"/>
    <property type="match status" value="1"/>
</dbReference>
<accession>P21276</accession>
<accession>Q9FE21</accession>
<accession>Q9SW16</accession>
<reference key="1">
    <citation type="journal article" date="1990" name="Proc. Natl. Acad. Sci. U.S.A.">
        <title>Characterization of iron superoxide dismutase cDNAs from plants obtained by genetic complementation in Escherichia coli.</title>
        <authorList>
            <person name="van Camp W."/>
            <person name="Bowler C."/>
            <person name="Villarroel R."/>
            <person name="Tsang E.W.T."/>
            <person name="van Montagu M."/>
            <person name="Inze D."/>
        </authorList>
    </citation>
    <scope>NUCLEOTIDE SEQUENCE [MRNA]</scope>
    <source>
        <strain>cv. C24</strain>
    </source>
</reference>
<reference key="2">
    <citation type="journal article" date="1999" name="Nature">
        <title>Sequence and analysis of chromosome 4 of the plant Arabidopsis thaliana.</title>
        <authorList>
            <person name="Mayer K.F.X."/>
            <person name="Schueller C."/>
            <person name="Wambutt R."/>
            <person name="Murphy G."/>
            <person name="Volckaert G."/>
            <person name="Pohl T."/>
            <person name="Duesterhoeft A."/>
            <person name="Stiekema W."/>
            <person name="Entian K.-D."/>
            <person name="Terryn N."/>
            <person name="Harris B."/>
            <person name="Ansorge W."/>
            <person name="Brandt P."/>
            <person name="Grivell L.A."/>
            <person name="Rieger M."/>
            <person name="Weichselgartner M."/>
            <person name="de Simone V."/>
            <person name="Obermaier B."/>
            <person name="Mache R."/>
            <person name="Mueller M."/>
            <person name="Kreis M."/>
            <person name="Delseny M."/>
            <person name="Puigdomenech P."/>
            <person name="Watson M."/>
            <person name="Schmidtheini T."/>
            <person name="Reichert B."/>
            <person name="Portetelle D."/>
            <person name="Perez-Alonso M."/>
            <person name="Boutry M."/>
            <person name="Bancroft I."/>
            <person name="Vos P."/>
            <person name="Hoheisel J."/>
            <person name="Zimmermann W."/>
            <person name="Wedler H."/>
            <person name="Ridley P."/>
            <person name="Langham S.-A."/>
            <person name="McCullagh B."/>
            <person name="Bilham L."/>
            <person name="Robben J."/>
            <person name="van der Schueren J."/>
            <person name="Grymonprez B."/>
            <person name="Chuang Y.-J."/>
            <person name="Vandenbussche F."/>
            <person name="Braeken M."/>
            <person name="Weltjens I."/>
            <person name="Voet M."/>
            <person name="Bastiaens I."/>
            <person name="Aert R."/>
            <person name="Defoor E."/>
            <person name="Weitzenegger T."/>
            <person name="Bothe G."/>
            <person name="Ramsperger U."/>
            <person name="Hilbert H."/>
            <person name="Braun M."/>
            <person name="Holzer E."/>
            <person name="Brandt A."/>
            <person name="Peters S."/>
            <person name="van Staveren M."/>
            <person name="Dirkse W."/>
            <person name="Mooijman P."/>
            <person name="Klein Lankhorst R."/>
            <person name="Rose M."/>
            <person name="Hauf J."/>
            <person name="Koetter P."/>
            <person name="Berneiser S."/>
            <person name="Hempel S."/>
            <person name="Feldpausch M."/>
            <person name="Lamberth S."/>
            <person name="Van den Daele H."/>
            <person name="De Keyser A."/>
            <person name="Buysshaert C."/>
            <person name="Gielen J."/>
            <person name="Villarroel R."/>
            <person name="De Clercq R."/>
            <person name="van Montagu M."/>
            <person name="Rogers J."/>
            <person name="Cronin A."/>
            <person name="Quail M.A."/>
            <person name="Bray-Allen S."/>
            <person name="Clark L."/>
            <person name="Doggett J."/>
            <person name="Hall S."/>
            <person name="Kay M."/>
            <person name="Lennard N."/>
            <person name="McLay K."/>
            <person name="Mayes R."/>
            <person name="Pettett A."/>
            <person name="Rajandream M.A."/>
            <person name="Lyne M."/>
            <person name="Benes V."/>
            <person name="Rechmann S."/>
            <person name="Borkova D."/>
            <person name="Bloecker H."/>
            <person name="Scharfe M."/>
            <person name="Grimm M."/>
            <person name="Loehnert T.-H."/>
            <person name="Dose S."/>
            <person name="de Haan M."/>
            <person name="Maarse A.C."/>
            <person name="Schaefer M."/>
            <person name="Mueller-Auer S."/>
            <person name="Gabel C."/>
            <person name="Fuchs M."/>
            <person name="Fartmann B."/>
            <person name="Granderath K."/>
            <person name="Dauner D."/>
            <person name="Herzl A."/>
            <person name="Neumann S."/>
            <person name="Argiriou A."/>
            <person name="Vitale D."/>
            <person name="Liguori R."/>
            <person name="Piravandi E."/>
            <person name="Massenet O."/>
            <person name="Quigley F."/>
            <person name="Clabauld G."/>
            <person name="Muendlein A."/>
            <person name="Felber R."/>
            <person name="Schnabl S."/>
            <person name="Hiller R."/>
            <person name="Schmidt W."/>
            <person name="Lecharny A."/>
            <person name="Aubourg S."/>
            <person name="Chefdor F."/>
            <person name="Cooke R."/>
            <person name="Berger C."/>
            <person name="Monfort A."/>
            <person name="Casacuberta E."/>
            <person name="Gibbons T."/>
            <person name="Weber N."/>
            <person name="Vandenbol M."/>
            <person name="Bargues M."/>
            <person name="Terol J."/>
            <person name="Torres A."/>
            <person name="Perez-Perez A."/>
            <person name="Purnelle B."/>
            <person name="Bent E."/>
            <person name="Johnson S."/>
            <person name="Tacon D."/>
            <person name="Jesse T."/>
            <person name="Heijnen L."/>
            <person name="Schwarz S."/>
            <person name="Scholler P."/>
            <person name="Heber S."/>
            <person name="Francs P."/>
            <person name="Bielke C."/>
            <person name="Frishman D."/>
            <person name="Haase D."/>
            <person name="Lemcke K."/>
            <person name="Mewes H.-W."/>
            <person name="Stocker S."/>
            <person name="Zaccaria P."/>
            <person name="Bevan M."/>
            <person name="Wilson R.K."/>
            <person name="de la Bastide M."/>
            <person name="Habermann K."/>
            <person name="Parnell L."/>
            <person name="Dedhia N."/>
            <person name="Gnoj L."/>
            <person name="Schutz K."/>
            <person name="Huang E."/>
            <person name="Spiegel L."/>
            <person name="Sekhon M."/>
            <person name="Murray J."/>
            <person name="Sheet P."/>
            <person name="Cordes M."/>
            <person name="Abu-Threideh J."/>
            <person name="Stoneking T."/>
            <person name="Kalicki J."/>
            <person name="Graves T."/>
            <person name="Harmon G."/>
            <person name="Edwards J."/>
            <person name="Latreille P."/>
            <person name="Courtney L."/>
            <person name="Cloud J."/>
            <person name="Abbott A."/>
            <person name="Scott K."/>
            <person name="Johnson D."/>
            <person name="Minx P."/>
            <person name="Bentley D."/>
            <person name="Fulton B."/>
            <person name="Miller N."/>
            <person name="Greco T."/>
            <person name="Kemp K."/>
            <person name="Kramer J."/>
            <person name="Fulton L."/>
            <person name="Mardis E."/>
            <person name="Dante M."/>
            <person name="Pepin K."/>
            <person name="Hillier L.W."/>
            <person name="Nelson J."/>
            <person name="Spieth J."/>
            <person name="Ryan E."/>
            <person name="Andrews S."/>
            <person name="Geisel C."/>
            <person name="Layman D."/>
            <person name="Du H."/>
            <person name="Ali J."/>
            <person name="Berghoff A."/>
            <person name="Jones K."/>
            <person name="Drone K."/>
            <person name="Cotton M."/>
            <person name="Joshu C."/>
            <person name="Antonoiu B."/>
            <person name="Zidanic M."/>
            <person name="Strong C."/>
            <person name="Sun H."/>
            <person name="Lamar B."/>
            <person name="Yordan C."/>
            <person name="Ma P."/>
            <person name="Zhong J."/>
            <person name="Preston R."/>
            <person name="Vil D."/>
            <person name="Shekher M."/>
            <person name="Matero A."/>
            <person name="Shah R."/>
            <person name="Swaby I.K."/>
            <person name="O'Shaughnessy A."/>
            <person name="Rodriguez M."/>
            <person name="Hoffman J."/>
            <person name="Till S."/>
            <person name="Granat S."/>
            <person name="Shohdy N."/>
            <person name="Hasegawa A."/>
            <person name="Hameed A."/>
            <person name="Lodhi M."/>
            <person name="Johnson A."/>
            <person name="Chen E."/>
            <person name="Marra M.A."/>
            <person name="Martienssen R."/>
            <person name="McCombie W.R."/>
        </authorList>
    </citation>
    <scope>NUCLEOTIDE SEQUENCE [LARGE SCALE GENOMIC DNA]</scope>
    <source>
        <strain>cv. Columbia</strain>
    </source>
</reference>
<reference key="3">
    <citation type="journal article" date="2017" name="Plant J.">
        <title>Araport11: a complete reannotation of the Arabidopsis thaliana reference genome.</title>
        <authorList>
            <person name="Cheng C.Y."/>
            <person name="Krishnakumar V."/>
            <person name="Chan A.P."/>
            <person name="Thibaud-Nissen F."/>
            <person name="Schobel S."/>
            <person name="Town C.D."/>
        </authorList>
    </citation>
    <scope>GENOME REANNOTATION</scope>
    <source>
        <strain>cv. Columbia</strain>
    </source>
</reference>
<reference key="4">
    <citation type="journal article" date="2003" name="Science">
        <title>Empirical analysis of transcriptional activity in the Arabidopsis genome.</title>
        <authorList>
            <person name="Yamada K."/>
            <person name="Lim J."/>
            <person name="Dale J.M."/>
            <person name="Chen H."/>
            <person name="Shinn P."/>
            <person name="Palm C.J."/>
            <person name="Southwick A.M."/>
            <person name="Wu H.C."/>
            <person name="Kim C.J."/>
            <person name="Nguyen M."/>
            <person name="Pham P.K."/>
            <person name="Cheuk R.F."/>
            <person name="Karlin-Newmann G."/>
            <person name="Liu S.X."/>
            <person name="Lam B."/>
            <person name="Sakano H."/>
            <person name="Wu T."/>
            <person name="Yu G."/>
            <person name="Miranda M."/>
            <person name="Quach H.L."/>
            <person name="Tripp M."/>
            <person name="Chang C.H."/>
            <person name="Lee J.M."/>
            <person name="Toriumi M.J."/>
            <person name="Chan M.M."/>
            <person name="Tang C.C."/>
            <person name="Onodera C.S."/>
            <person name="Deng J.M."/>
            <person name="Akiyama K."/>
            <person name="Ansari Y."/>
            <person name="Arakawa T."/>
            <person name="Banh J."/>
            <person name="Banno F."/>
            <person name="Bowser L."/>
            <person name="Brooks S.Y."/>
            <person name="Carninci P."/>
            <person name="Chao Q."/>
            <person name="Choy N."/>
            <person name="Enju A."/>
            <person name="Goldsmith A.D."/>
            <person name="Gurjal M."/>
            <person name="Hansen N.F."/>
            <person name="Hayashizaki Y."/>
            <person name="Johnson-Hopson C."/>
            <person name="Hsuan V.W."/>
            <person name="Iida K."/>
            <person name="Karnes M."/>
            <person name="Khan S."/>
            <person name="Koesema E."/>
            <person name="Ishida J."/>
            <person name="Jiang P.X."/>
            <person name="Jones T."/>
            <person name="Kawai J."/>
            <person name="Kamiya A."/>
            <person name="Meyers C."/>
            <person name="Nakajima M."/>
            <person name="Narusaka M."/>
            <person name="Seki M."/>
            <person name="Sakurai T."/>
            <person name="Satou M."/>
            <person name="Tamse R."/>
            <person name="Vaysberg M."/>
            <person name="Wallender E.K."/>
            <person name="Wong C."/>
            <person name="Yamamura Y."/>
            <person name="Yuan S."/>
            <person name="Shinozaki K."/>
            <person name="Davis R.W."/>
            <person name="Theologis A."/>
            <person name="Ecker J.R."/>
        </authorList>
    </citation>
    <scope>NUCLEOTIDE SEQUENCE [LARGE SCALE MRNA]</scope>
    <source>
        <strain>cv. Columbia</strain>
    </source>
</reference>
<reference key="5">
    <citation type="submission" date="2002-03" db="EMBL/GenBank/DDBJ databases">
        <title>Full-length cDNA from Arabidopsis thaliana.</title>
        <authorList>
            <person name="Brover V.V."/>
            <person name="Troukhan M.E."/>
            <person name="Alexandrov N.A."/>
            <person name="Lu Y.-P."/>
            <person name="Flavell R.B."/>
            <person name="Feldmann K.A."/>
        </authorList>
    </citation>
    <scope>NUCLEOTIDE SEQUENCE [LARGE SCALE MRNA]</scope>
</reference>
<reference key="6">
    <citation type="journal article" date="1998" name="Plant Physiol.">
        <title>Superoxide dismutase in Arabidopsis: an eclectic enzyme family with disparate regulation and protein localization.</title>
        <authorList>
            <person name="Kliebenstein D.J."/>
            <person name="Monde R.A."/>
            <person name="Last R.L."/>
        </authorList>
    </citation>
    <scope>INDUCTION BY LIGHT AND OZONE</scope>
    <scope>GENE FAMILY</scope>
</reference>
<reference key="7">
    <citation type="journal article" date="2004" name="Mol. Cell. Proteomics">
        <title>Identification of new intrinsic proteins in Arabidopsis plasma membrane proteome.</title>
        <authorList>
            <person name="Marmagne A."/>
            <person name="Rouet M.-A."/>
            <person name="Ferro M."/>
            <person name="Rolland N."/>
            <person name="Alcon C."/>
            <person name="Joyard J."/>
            <person name="Garin J."/>
            <person name="Barbier-Brygoo H."/>
            <person name="Ephritikhine G."/>
        </authorList>
    </citation>
    <scope>IDENTIFICATION BY MASS SPECTROMETRY</scope>
    <scope>SUBCELLULAR LOCATION [LARGE SCALE ANALYSIS]</scope>
</reference>
<reference key="8">
    <citation type="journal article" date="2008" name="Plant Cell">
        <title>A heterocomplex of iron superoxide dismutases defends chloroplast nucleoids against oxidative stress and is essential for chloroplast development in Arabidopsis.</title>
        <authorList>
            <person name="Myouga F."/>
            <person name="Hosoda C."/>
            <person name="Umezawa T."/>
            <person name="Iizumi H."/>
            <person name="Kuromori T."/>
            <person name="Motohashi R."/>
            <person name="Shono Y."/>
            <person name="Nagata N."/>
            <person name="Ikeuchi M."/>
            <person name="Shinozaki K."/>
        </authorList>
    </citation>
    <scope>SUBCELLULAR LOCATION</scope>
    <scope>SUBUNIT</scope>
</reference>
<reference key="9">
    <citation type="journal article" date="2012" name="Mol. Cell. Proteomics">
        <title>Comparative large-scale characterisation of plant vs. mammal proteins reveals similar and idiosyncratic N-alpha acetylation features.</title>
        <authorList>
            <person name="Bienvenut W.V."/>
            <person name="Sumpton D."/>
            <person name="Martinez A."/>
            <person name="Lilla S."/>
            <person name="Espagne C."/>
            <person name="Meinnel T."/>
            <person name="Giglione C."/>
        </authorList>
    </citation>
    <scope>ACETYLATION [LARGE SCALE ANALYSIS] AT ALA-2</scope>
    <scope>CLEAVAGE OF INITIATOR METHIONINE [LARGE SCALE ANALYSIS]</scope>
    <scope>IDENTIFICATION BY MASS SPECTROMETRY [LARGE SCALE ANALYSIS]</scope>
</reference>
<reference key="10">
    <citation type="journal article" date="2013" name="New Phytol.">
        <title>CHAPERONIN 20 mediates iron superoxide dismutase (FeSOD) activity independent of its co-chaperonin role in Arabidopsis chloroplasts.</title>
        <authorList>
            <person name="Kuo W.Y."/>
            <person name="Huang C.H."/>
            <person name="Liu A.C."/>
            <person name="Cheng C.P."/>
            <person name="Li S.H."/>
            <person name="Chang W.C."/>
            <person name="Weiss C."/>
            <person name="Azem A."/>
            <person name="Jinn T.L."/>
        </authorList>
    </citation>
    <scope>SUBCELLULAR LOCATION</scope>
    <scope>CATALYTIC ACTIVITY</scope>
    <scope>COFACTOR</scope>
    <scope>ACTIVITY REGULATION</scope>
    <scope>INTERACTION WITH CPN20/CPN21</scope>
</reference>
<proteinExistence type="evidence at protein level"/>
<gene>
    <name type="primary">FSD1</name>
    <name type="synonym">SODB</name>
    <name type="ordered locus">At4g25100</name>
    <name type="ORF">F13M23.240</name>
</gene>
<keyword id="KW-0007">Acetylation</keyword>
<keyword id="KW-0025">Alternative splicing</keyword>
<keyword id="KW-1003">Cell membrane</keyword>
<keyword id="KW-0150">Chloroplast</keyword>
<keyword id="KW-0408">Iron</keyword>
<keyword id="KW-0472">Membrane</keyword>
<keyword id="KW-0479">Metal-binding</keyword>
<keyword id="KW-0560">Oxidoreductase</keyword>
<keyword id="KW-0934">Plastid</keyword>
<keyword id="KW-1185">Reference proteome</keyword>
<keyword id="KW-0809">Transit peptide</keyword>
<feature type="initiator methionine" description="Removed" evidence="10">
    <location>
        <position position="1"/>
    </location>
</feature>
<feature type="transit peptide" description="Chloroplast" evidence="2">
    <location>
        <begin position="2"/>
        <end status="unknown"/>
    </location>
</feature>
<feature type="chain" id="PRO_0000032889" description="Superoxide dismutase [Fe] 1, chloroplastic">
    <location>
        <begin status="unknown"/>
        <end position="212"/>
    </location>
</feature>
<feature type="binding site" evidence="1">
    <location>
        <position position="35"/>
    </location>
    <ligand>
        <name>Fe cation</name>
        <dbReference type="ChEBI" id="CHEBI:24875"/>
    </ligand>
</feature>
<feature type="binding site" evidence="1">
    <location>
        <position position="87"/>
    </location>
    <ligand>
        <name>Fe cation</name>
        <dbReference type="ChEBI" id="CHEBI:24875"/>
    </ligand>
</feature>
<feature type="binding site" evidence="1">
    <location>
        <position position="169"/>
    </location>
    <ligand>
        <name>Fe cation</name>
        <dbReference type="ChEBI" id="CHEBI:24875"/>
    </ligand>
</feature>
<feature type="binding site" evidence="1">
    <location>
        <position position="173"/>
    </location>
    <ligand>
        <name>Fe cation</name>
        <dbReference type="ChEBI" id="CHEBI:24875"/>
    </ligand>
</feature>
<feature type="modified residue" description="N-acetylalanine" evidence="10">
    <location>
        <position position="2"/>
    </location>
</feature>
<organism>
    <name type="scientific">Arabidopsis thaliana</name>
    <name type="common">Mouse-ear cress</name>
    <dbReference type="NCBI Taxonomy" id="3702"/>
    <lineage>
        <taxon>Eukaryota</taxon>
        <taxon>Viridiplantae</taxon>
        <taxon>Streptophyta</taxon>
        <taxon>Embryophyta</taxon>
        <taxon>Tracheophyta</taxon>
        <taxon>Spermatophyta</taxon>
        <taxon>Magnoliopsida</taxon>
        <taxon>eudicotyledons</taxon>
        <taxon>Gunneridae</taxon>
        <taxon>Pentapetalae</taxon>
        <taxon>rosids</taxon>
        <taxon>malvids</taxon>
        <taxon>Brassicales</taxon>
        <taxon>Brassicaceae</taxon>
        <taxon>Camelineae</taxon>
        <taxon>Arabidopsis</taxon>
    </lineage>
</organism>
<sequence length="212" mass="23791">MAASSAVTANYVLKPPPFALDALEPHMSKQTLEFHWGKHHRAYVDNLKKQVLGTELEGKPLEHIIHSTYNNGDLLPAFNNAAQAWNHEFFWESMKPGGGGKPSGELLALLERDFTSYEKFYEEFNAAAATQFGAGWAWLAYSNEKLKVVKTPNAVNPLVLGSFPLLTIDVWEHAYYLDFQNRRPDYIKTFMTNLVSWEAVSARLEAAKAASA</sequence>
<comment type="function">
    <text>Destroys superoxide anion radicals which are normally produced within the cells and which are toxic to biological systems.</text>
</comment>
<comment type="catalytic activity">
    <reaction evidence="9">
        <text>2 superoxide + 2 H(+) = H2O2 + O2</text>
        <dbReference type="Rhea" id="RHEA:20696"/>
        <dbReference type="ChEBI" id="CHEBI:15378"/>
        <dbReference type="ChEBI" id="CHEBI:15379"/>
        <dbReference type="ChEBI" id="CHEBI:16240"/>
        <dbReference type="ChEBI" id="CHEBI:18421"/>
        <dbReference type="EC" id="1.15.1.1"/>
    </reaction>
</comment>
<comment type="cofactor">
    <cofactor evidence="5">
        <name>Fe cation</name>
        <dbReference type="ChEBI" id="CHEBI:24875"/>
    </cofactor>
    <text evidence="5">Binds 1 Fe cation per subunit.</text>
</comment>
<comment type="activity regulation">
    <text evidence="5">Activated by cpn20/cpn21.</text>
</comment>
<comment type="subunit">
    <text evidence="4 5">Homodimer. Interacts with cpn20/cpn21.</text>
</comment>
<comment type="subcellular location">
    <subcellularLocation>
        <location evidence="3">Cell membrane</location>
    </subcellularLocation>
    <subcellularLocation>
        <location>Plastid</location>
        <location>Chloroplast membrane</location>
    </subcellularLocation>
    <subcellularLocation>
        <location>Plastid</location>
        <location>Chloroplast stroma</location>
    </subcellularLocation>
</comment>
<comment type="alternative products">
    <event type="alternative splicing"/>
    <isoform>
        <id>P21276-1</id>
        <name>1</name>
        <sequence type="displayed"/>
    </isoform>
    <text>A number of isoforms are produced. According to EST sequences.</text>
</comment>
<comment type="induction">
    <text evidence="6">Circadian-regulation. Down-regulated upon photosynthetically active radiation (PAR) (e.g. light fluence) increase and in response to ozone fumigation.</text>
</comment>
<comment type="similarity">
    <text evidence="8">Belongs to the iron/manganese superoxide dismutase family.</text>
</comment>
<comment type="sequence caution" evidence="8">
    <conflict type="erroneous initiation">
        <sequence resource="EMBL-CDS" id="AAA32791"/>
    </conflict>
    <text>Extended N-terminus.</text>
</comment>
<comment type="sequence caution" evidence="8">
    <conflict type="erroneous gene model prediction">
        <sequence resource="EMBL-CDS" id="CAB36752"/>
    </conflict>
</comment>
<comment type="sequence caution" evidence="8">
    <conflict type="erroneous gene model prediction">
        <sequence resource="EMBL-CDS" id="CAB79419"/>
    </conflict>
</comment>
<name>SODF1_ARATH</name>
<evidence type="ECO:0000250" key="1"/>
<evidence type="ECO:0000255" key="2"/>
<evidence type="ECO:0000269" key="3">
    <source>
    </source>
</evidence>
<evidence type="ECO:0000269" key="4">
    <source>
    </source>
</evidence>
<evidence type="ECO:0000269" key="5">
    <source>
    </source>
</evidence>
<evidence type="ECO:0000269" key="6">
    <source>
    </source>
</evidence>
<evidence type="ECO:0000303" key="7">
    <source>
    </source>
</evidence>
<evidence type="ECO:0000305" key="8"/>
<evidence type="ECO:0000305" key="9">
    <source>
    </source>
</evidence>
<evidence type="ECO:0007744" key="10">
    <source>
    </source>
</evidence>